<comment type="function">
    <text evidence="1">Plays a role in limiting the replication of viral DNA in keratinocytes. Recruits the host NCoR/SMRT complex to viral replication foci to mediate repression of both viral replication and transcription.</text>
</comment>
<comment type="subcellular location">
    <subcellularLocation>
        <location evidence="1">Host nucleus</location>
    </subcellularLocation>
</comment>
<comment type="similarity">
    <text evidence="3">Belongs to the papillomaviridae E8^E2C protein family.</text>
</comment>
<evidence type="ECO:0000250" key="1">
    <source>
        <dbReference type="UniProtKB" id="P0DKA0"/>
    </source>
</evidence>
<evidence type="ECO:0000256" key="2">
    <source>
        <dbReference type="SAM" id="MobiDB-lite"/>
    </source>
</evidence>
<evidence type="ECO:0000305" key="3"/>
<organismHost>
    <name type="scientific">Homo sapiens</name>
    <name type="common">Human</name>
    <dbReference type="NCBI Taxonomy" id="9606"/>
</organismHost>
<sequence length="207" mass="22978">MKLTILTKRFRSSSPLRTSGSPTDTNPATQGQSTQTARKAETKGSRHHPKSPAVRKRRPYGRRRSRSPRDTTLRRGEGESARASAGSGERVAFISPGDVGTSTRSPPKGGQSRLRRLIQEARDPPIICLKGGPNQLKCLRYRIKASNSSDFESISTTWHWVHNKCTDRVGHARMLVRFISTEQRDRFLDKVVVPKSVSVILGAFDGS</sequence>
<feature type="chain" id="PRO_0000438756" description="Protein E8^E2C">
    <location>
        <begin position="1"/>
        <end position="207"/>
    </location>
</feature>
<feature type="region of interest" description="Disordered" evidence="2">
    <location>
        <begin position="1"/>
        <end position="111"/>
    </location>
</feature>
<feature type="compositionally biased region" description="Polar residues" evidence="2">
    <location>
        <begin position="12"/>
        <end position="37"/>
    </location>
</feature>
<feature type="compositionally biased region" description="Basic residues" evidence="2">
    <location>
        <begin position="45"/>
        <end position="66"/>
    </location>
</feature>
<feature type="compositionally biased region" description="Basic and acidic residues" evidence="2">
    <location>
        <begin position="67"/>
        <end position="80"/>
    </location>
</feature>
<dbReference type="EMBL" id="X70828">
    <property type="status" value="NOT_ANNOTATED_CDS"/>
    <property type="molecule type" value="Genomic_DNA"/>
</dbReference>
<dbReference type="SMR" id="P0DOD1"/>
<dbReference type="Proteomes" id="UP000007671">
    <property type="component" value="Segment"/>
</dbReference>
<dbReference type="GO" id="GO:0042025">
    <property type="term" value="C:host cell nucleus"/>
    <property type="evidence" value="ECO:0007669"/>
    <property type="project" value="UniProtKB-SubCell"/>
</dbReference>
<dbReference type="GO" id="GO:0003677">
    <property type="term" value="F:DNA binding"/>
    <property type="evidence" value="ECO:0007669"/>
    <property type="project" value="InterPro"/>
</dbReference>
<dbReference type="GO" id="GO:0003700">
    <property type="term" value="F:DNA-binding transcription factor activity"/>
    <property type="evidence" value="ECO:0007669"/>
    <property type="project" value="InterPro"/>
</dbReference>
<dbReference type="GO" id="GO:0006275">
    <property type="term" value="P:regulation of DNA replication"/>
    <property type="evidence" value="ECO:0007669"/>
    <property type="project" value="InterPro"/>
</dbReference>
<dbReference type="Gene3D" id="3.30.70.330">
    <property type="match status" value="1"/>
</dbReference>
<dbReference type="InterPro" id="IPR035975">
    <property type="entry name" value="E2/EBNA1_C_sf"/>
</dbReference>
<dbReference type="InterPro" id="IPR012677">
    <property type="entry name" value="Nucleotide-bd_a/b_plait_sf"/>
</dbReference>
<dbReference type="InterPro" id="IPR000427">
    <property type="entry name" value="Papillomavirus_E2_C"/>
</dbReference>
<dbReference type="Pfam" id="PF00511">
    <property type="entry name" value="PPV_E2_C"/>
    <property type="match status" value="1"/>
</dbReference>
<dbReference type="SUPFAM" id="SSF54957">
    <property type="entry name" value="Viral DNA-binding domain"/>
    <property type="match status" value="1"/>
</dbReference>
<protein>
    <recommendedName>
        <fullName>Protein E8^E2C</fullName>
    </recommendedName>
</protein>
<organism>
    <name type="scientific">Human papillomavirus type 63</name>
    <dbReference type="NCBI Taxonomy" id="28311"/>
    <lineage>
        <taxon>Viruses</taxon>
        <taxon>Monodnaviria</taxon>
        <taxon>Shotokuvirae</taxon>
        <taxon>Cossaviricota</taxon>
        <taxon>Papovaviricetes</taxon>
        <taxon>Zurhausenvirales</taxon>
        <taxon>Papillomaviridae</taxon>
        <taxon>Firstpapillomavirinae</taxon>
        <taxon>Mupapillomavirus</taxon>
        <taxon>Mupapillomavirus 2</taxon>
    </lineage>
</organism>
<proteinExistence type="inferred from homology"/>
<keyword id="KW-1048">Host nucleus</keyword>
<keyword id="KW-1185">Reference proteome</keyword>
<reference key="1">
    <citation type="journal article" date="1993" name="Virology">
        <title>Two novel types of human papillomavirus, HPV 63 and HPV 65: comparisons of their clinical and histological features and DNA sequences to other HPV types.</title>
        <authorList>
            <person name="Egawa K."/>
            <person name="Delius H."/>
            <person name="Matsukura T."/>
            <person name="Kawashima M."/>
            <person name="de Villiers E.M."/>
        </authorList>
    </citation>
    <scope>NUCLEOTIDE SEQUENCE [GENOMIC DNA]</scope>
</reference>
<name>VE8E2_HPV63</name>
<accession>P0DOD1</accession>